<feature type="signal peptide" evidence="2">
    <location>
        <begin position="1"/>
        <end position="21"/>
    </location>
</feature>
<feature type="chain" id="PRO_0000416723" description="Membrane glycoprotein US8">
    <location>
        <begin position="22"/>
        <end position="227"/>
    </location>
</feature>
<feature type="topological domain" description="Lumenal" evidence="2">
    <location>
        <begin position="22"/>
        <end position="178"/>
    </location>
</feature>
<feature type="transmembrane region" description="Helical" evidence="2">
    <location>
        <begin position="179"/>
        <end position="199"/>
    </location>
</feature>
<feature type="topological domain" description="Cytoplasmic" evidence="2">
    <location>
        <begin position="200"/>
        <end position="227"/>
    </location>
</feature>
<feature type="domain" description="Ig-like H-type">
    <location>
        <begin position="61"/>
        <end position="155"/>
    </location>
</feature>
<feature type="glycosylation site" description="N-linked (GlcNAc...) asparagine; by host" evidence="2">
    <location>
        <position position="61"/>
    </location>
</feature>
<feature type="disulfide bond" evidence="1">
    <location>
        <begin position="69"/>
        <end position="151"/>
    </location>
</feature>
<gene>
    <name type="primary">US8</name>
    <name type="ORF">HHV5wtgp139</name>
</gene>
<accession>F5HB52</accession>
<organism>
    <name type="scientific">Human cytomegalovirus (strain Merlin)</name>
    <name type="common">HHV-5</name>
    <name type="synonym">Human herpesvirus 5</name>
    <dbReference type="NCBI Taxonomy" id="295027"/>
    <lineage>
        <taxon>Viruses</taxon>
        <taxon>Duplodnaviria</taxon>
        <taxon>Heunggongvirae</taxon>
        <taxon>Peploviricota</taxon>
        <taxon>Herviviricetes</taxon>
        <taxon>Herpesvirales</taxon>
        <taxon>Orthoherpesviridae</taxon>
        <taxon>Betaherpesvirinae</taxon>
        <taxon>Cytomegalovirus</taxon>
        <taxon>Cytomegalovirus humanbeta5</taxon>
        <taxon>Human cytomegalovirus</taxon>
    </lineage>
</organism>
<protein>
    <recommendedName>
        <fullName>Membrane glycoprotein US8</fullName>
    </recommendedName>
</protein>
<sequence length="227" mass="26658">MRRWLRLLVGLGCCWVTLAHAGNPYEDDDYYYYREDEPRQHGEPNYVAPPARQFRFPPLNNVSSYQASCVVKDGVLDAVWRVQGTFYPEKGIVARVGWSGRRGRKWGRLHAPECLVETTEAVFRLRQWVPTDLDHLTLHLVPCTKCKPMWCQPRYHIRYFSYGNSVDNLRRLHYEYRHLELGVVIAIQMAMVLLLGYVLARTVYRVSSAYYLRWHACVPQKCEKSLC</sequence>
<organismHost>
    <name type="scientific">Homo sapiens</name>
    <name type="common">Human</name>
    <dbReference type="NCBI Taxonomy" id="9606"/>
</organismHost>
<evidence type="ECO:0000250" key="1"/>
<evidence type="ECO:0000255" key="2"/>
<evidence type="ECO:0000305" key="3"/>
<reference key="1">
    <citation type="journal article" date="2004" name="J. Gen. Virol.">
        <title>Genetic content of wild-type human cytomegalovirus.</title>
        <authorList>
            <person name="Dolan A."/>
            <person name="Cunningham C."/>
            <person name="Hector R.D."/>
            <person name="Hassan-Walker A.F."/>
            <person name="Lee L."/>
            <person name="Addison C."/>
            <person name="Dargan D.J."/>
            <person name="McGeoch D.J."/>
            <person name="Gatherer D."/>
            <person name="Emery V.C."/>
            <person name="Griffiths P.D."/>
            <person name="Sinzger C."/>
            <person name="McSharry B.P."/>
            <person name="Wilkinson G.W.G."/>
            <person name="Davison A.J."/>
        </authorList>
    </citation>
    <scope>NUCLEOTIDE SEQUENCE [LARGE SCALE GENOMIC DNA]</scope>
    <source>
        <strain>Merlin</strain>
    </source>
</reference>
<dbReference type="EMBL" id="AY446894">
    <property type="protein sequence ID" value="AAR31697.1"/>
    <property type="molecule type" value="Genomic_DNA"/>
</dbReference>
<dbReference type="RefSeq" id="YP_081593.1">
    <property type="nucleotide sequence ID" value="NC_006273.2"/>
</dbReference>
<dbReference type="GlyCosmos" id="F5HB52">
    <property type="glycosylation" value="1 site, No reported glycans"/>
</dbReference>
<dbReference type="DNASU" id="3077426"/>
<dbReference type="GeneID" id="3077426"/>
<dbReference type="KEGG" id="vg:3077426"/>
<dbReference type="Reactome" id="R-HSA-9609690">
    <property type="pathway name" value="HCMV Early Events"/>
</dbReference>
<dbReference type="Proteomes" id="UP000000938">
    <property type="component" value="Segment"/>
</dbReference>
<dbReference type="GO" id="GO:0044167">
    <property type="term" value="C:host cell endoplasmic reticulum membrane"/>
    <property type="evidence" value="ECO:0007669"/>
    <property type="project" value="UniProtKB-SubCell"/>
</dbReference>
<dbReference type="GO" id="GO:0044178">
    <property type="term" value="C:host cell Golgi membrane"/>
    <property type="evidence" value="ECO:0007669"/>
    <property type="project" value="UniProtKB-SubCell"/>
</dbReference>
<dbReference type="GO" id="GO:0016020">
    <property type="term" value="C:membrane"/>
    <property type="evidence" value="ECO:0007669"/>
    <property type="project" value="UniProtKB-KW"/>
</dbReference>
<dbReference type="GO" id="GO:0052031">
    <property type="term" value="P:symbiont-mediated perturbation of host defense response"/>
    <property type="evidence" value="ECO:0007669"/>
    <property type="project" value="InterPro"/>
</dbReference>
<dbReference type="InterPro" id="IPR012536">
    <property type="entry name" value="CMV_US"/>
</dbReference>
<dbReference type="Pfam" id="PF08001">
    <property type="entry name" value="CMV_US"/>
    <property type="match status" value="1"/>
</dbReference>
<keyword id="KW-1015">Disulfide bond</keyword>
<keyword id="KW-0325">Glycoprotein</keyword>
<keyword id="KW-1038">Host endoplasmic reticulum</keyword>
<keyword id="KW-1040">Host Golgi apparatus</keyword>
<keyword id="KW-1043">Host membrane</keyword>
<keyword id="KW-0393">Immunoglobulin domain</keyword>
<keyword id="KW-0472">Membrane</keyword>
<keyword id="KW-1185">Reference proteome</keyword>
<keyword id="KW-0732">Signal</keyword>
<keyword id="KW-0812">Transmembrane</keyword>
<keyword id="KW-1133">Transmembrane helix</keyword>
<name>US08_HCMVM</name>
<proteinExistence type="inferred from homology"/>
<comment type="subcellular location">
    <subcellularLocation>
        <location>Host endoplasmic reticulum membrane</location>
        <topology>Single-pass type I membrane protein</topology>
    </subcellularLocation>
    <subcellularLocation>
        <location evidence="1">Host Golgi apparatus membrane</location>
        <topology evidence="1">Single-pass type I membrane protein</topology>
    </subcellularLocation>
</comment>
<comment type="similarity">
    <text evidence="3">Belongs to the cytomegalovirus US6 family.</text>
</comment>